<comment type="function">
    <text evidence="1">Catalyzes the N-acylation of UDP-3-O-acylglucosamine using 3-hydroxyacyl-ACP as the acyl donor. Is involved in the biosynthesis of lipid A, a phosphorylated glycolipid that anchors the lipopolysaccharide to the outer membrane of the cell.</text>
</comment>
<comment type="catalytic activity">
    <reaction evidence="1">
        <text>a UDP-3-O-[(3R)-3-hydroxyacyl]-alpha-D-glucosamine + a (3R)-hydroxyacyl-[ACP] = a UDP-2-N,3-O-bis[(3R)-3-hydroxyacyl]-alpha-D-glucosamine + holo-[ACP] + H(+)</text>
        <dbReference type="Rhea" id="RHEA:53836"/>
        <dbReference type="Rhea" id="RHEA-COMP:9685"/>
        <dbReference type="Rhea" id="RHEA-COMP:9945"/>
        <dbReference type="ChEBI" id="CHEBI:15378"/>
        <dbReference type="ChEBI" id="CHEBI:64479"/>
        <dbReference type="ChEBI" id="CHEBI:78827"/>
        <dbReference type="ChEBI" id="CHEBI:137740"/>
        <dbReference type="ChEBI" id="CHEBI:137748"/>
        <dbReference type="EC" id="2.3.1.191"/>
    </reaction>
</comment>
<comment type="pathway">
    <text evidence="1">Bacterial outer membrane biogenesis; LPS lipid A biosynthesis.</text>
</comment>
<comment type="subunit">
    <text evidence="1">Homotrimer.</text>
</comment>
<comment type="similarity">
    <text evidence="1">Belongs to the transferase hexapeptide repeat family. LpxD subfamily.</text>
</comment>
<keyword id="KW-0012">Acyltransferase</keyword>
<keyword id="KW-0441">Lipid A biosynthesis</keyword>
<keyword id="KW-0444">Lipid biosynthesis</keyword>
<keyword id="KW-0443">Lipid metabolism</keyword>
<keyword id="KW-0677">Repeat</keyword>
<keyword id="KW-0808">Transferase</keyword>
<accession>B1YS64</accession>
<sequence>MALTLEELVKRFGGEIAGDAQCKVSGLAPLDQAGPQQLAFLANPKYLSQVETTRAGAVLIAPKDLEKLRAATDGQPAGPRMAGPLNFIVTPNPYAYFARVAQMFIDLATPPRAPGVHPSATIDPAAQVAASAVIGPHVTVEAGAVIEDGVQLDANVFIGRGTTIGAGSHLYPNASVYHGCKIGPRAIIHAGAVIGSDGFGFAPDFVGDGDARTGSWVKIPQVGGVTVGPDVEIGANTTIDRGAMADTVIDECVKIDNQVQIGHNCRIGAYTVIAGSAGIAGSTTIGRHCMIGGAAGIAGHVTLGDYVIITAKSGVSKSLPKAGIYTSAFPAVDHGEWNRSAALVRNLDKLRERIKALETALAAQGGTDA</sequence>
<gene>
    <name evidence="1" type="primary">lpxD</name>
    <name type="ordered locus">BamMC406_1911</name>
</gene>
<feature type="chain" id="PRO_1000127663" description="UDP-3-O-acylglucosamine N-acyltransferase">
    <location>
        <begin position="1"/>
        <end position="369"/>
    </location>
</feature>
<feature type="active site" description="Proton acceptor" evidence="1">
    <location>
        <position position="263"/>
    </location>
</feature>
<name>LPXD_BURA4</name>
<proteinExistence type="inferred from homology"/>
<dbReference type="EC" id="2.3.1.191" evidence="1"/>
<dbReference type="EMBL" id="CP001025">
    <property type="protein sequence ID" value="ACB64393.1"/>
    <property type="molecule type" value="Genomic_DNA"/>
</dbReference>
<dbReference type="RefSeq" id="WP_012364130.1">
    <property type="nucleotide sequence ID" value="NC_010551.1"/>
</dbReference>
<dbReference type="SMR" id="B1YS64"/>
<dbReference type="KEGG" id="bac:BamMC406_1911"/>
<dbReference type="HOGENOM" id="CLU_049865_0_1_4"/>
<dbReference type="OrthoDB" id="9784739at2"/>
<dbReference type="UniPathway" id="UPA00973"/>
<dbReference type="Proteomes" id="UP000001680">
    <property type="component" value="Chromosome 1"/>
</dbReference>
<dbReference type="GO" id="GO:0016020">
    <property type="term" value="C:membrane"/>
    <property type="evidence" value="ECO:0007669"/>
    <property type="project" value="GOC"/>
</dbReference>
<dbReference type="GO" id="GO:0016410">
    <property type="term" value="F:N-acyltransferase activity"/>
    <property type="evidence" value="ECO:0007669"/>
    <property type="project" value="InterPro"/>
</dbReference>
<dbReference type="GO" id="GO:0009245">
    <property type="term" value="P:lipid A biosynthetic process"/>
    <property type="evidence" value="ECO:0007669"/>
    <property type="project" value="UniProtKB-UniRule"/>
</dbReference>
<dbReference type="CDD" id="cd03352">
    <property type="entry name" value="LbH_LpxD"/>
    <property type="match status" value="1"/>
</dbReference>
<dbReference type="Gene3D" id="1.20.5.170">
    <property type="match status" value="1"/>
</dbReference>
<dbReference type="Gene3D" id="2.160.10.10">
    <property type="entry name" value="Hexapeptide repeat proteins"/>
    <property type="match status" value="1"/>
</dbReference>
<dbReference type="Gene3D" id="3.40.1390.10">
    <property type="entry name" value="MurE/MurF, N-terminal domain"/>
    <property type="match status" value="1"/>
</dbReference>
<dbReference type="HAMAP" id="MF_00523">
    <property type="entry name" value="LpxD"/>
    <property type="match status" value="1"/>
</dbReference>
<dbReference type="InterPro" id="IPR001451">
    <property type="entry name" value="Hexapep"/>
</dbReference>
<dbReference type="InterPro" id="IPR018357">
    <property type="entry name" value="Hexapep_transf_CS"/>
</dbReference>
<dbReference type="InterPro" id="IPR007691">
    <property type="entry name" value="LpxD"/>
</dbReference>
<dbReference type="InterPro" id="IPR011004">
    <property type="entry name" value="Trimer_LpxA-like_sf"/>
</dbReference>
<dbReference type="InterPro" id="IPR020573">
    <property type="entry name" value="UDP_GlcNAc_AcTrfase_non-rep"/>
</dbReference>
<dbReference type="NCBIfam" id="TIGR01853">
    <property type="entry name" value="lipid_A_lpxD"/>
    <property type="match status" value="1"/>
</dbReference>
<dbReference type="NCBIfam" id="NF002060">
    <property type="entry name" value="PRK00892.1"/>
    <property type="match status" value="1"/>
</dbReference>
<dbReference type="PANTHER" id="PTHR43378">
    <property type="entry name" value="UDP-3-O-ACYLGLUCOSAMINE N-ACYLTRANSFERASE"/>
    <property type="match status" value="1"/>
</dbReference>
<dbReference type="PANTHER" id="PTHR43378:SF2">
    <property type="entry name" value="UDP-3-O-ACYLGLUCOSAMINE N-ACYLTRANSFERASE 1, MITOCHONDRIAL-RELATED"/>
    <property type="match status" value="1"/>
</dbReference>
<dbReference type="Pfam" id="PF00132">
    <property type="entry name" value="Hexapep"/>
    <property type="match status" value="1"/>
</dbReference>
<dbReference type="Pfam" id="PF14602">
    <property type="entry name" value="Hexapep_2"/>
    <property type="match status" value="1"/>
</dbReference>
<dbReference type="Pfam" id="PF04613">
    <property type="entry name" value="LpxD"/>
    <property type="match status" value="1"/>
</dbReference>
<dbReference type="SUPFAM" id="SSF51161">
    <property type="entry name" value="Trimeric LpxA-like enzymes"/>
    <property type="match status" value="1"/>
</dbReference>
<dbReference type="PROSITE" id="PS00101">
    <property type="entry name" value="HEXAPEP_TRANSFERASES"/>
    <property type="match status" value="3"/>
</dbReference>
<organism>
    <name type="scientific">Burkholderia ambifaria (strain MC40-6)</name>
    <dbReference type="NCBI Taxonomy" id="398577"/>
    <lineage>
        <taxon>Bacteria</taxon>
        <taxon>Pseudomonadati</taxon>
        <taxon>Pseudomonadota</taxon>
        <taxon>Betaproteobacteria</taxon>
        <taxon>Burkholderiales</taxon>
        <taxon>Burkholderiaceae</taxon>
        <taxon>Burkholderia</taxon>
        <taxon>Burkholderia cepacia complex</taxon>
    </lineage>
</organism>
<reference key="1">
    <citation type="submission" date="2008-04" db="EMBL/GenBank/DDBJ databases">
        <title>Complete sequence of chromosome 1 of Burkholderia ambifaria MC40-6.</title>
        <authorList>
            <person name="Copeland A."/>
            <person name="Lucas S."/>
            <person name="Lapidus A."/>
            <person name="Glavina del Rio T."/>
            <person name="Dalin E."/>
            <person name="Tice H."/>
            <person name="Pitluck S."/>
            <person name="Chain P."/>
            <person name="Malfatti S."/>
            <person name="Shin M."/>
            <person name="Vergez L."/>
            <person name="Lang D."/>
            <person name="Schmutz J."/>
            <person name="Larimer F."/>
            <person name="Land M."/>
            <person name="Hauser L."/>
            <person name="Kyrpides N."/>
            <person name="Lykidis A."/>
            <person name="Ramette A."/>
            <person name="Konstantinidis K."/>
            <person name="Tiedje J."/>
            <person name="Richardson P."/>
        </authorList>
    </citation>
    <scope>NUCLEOTIDE SEQUENCE [LARGE SCALE GENOMIC DNA]</scope>
    <source>
        <strain>MC40-6</strain>
    </source>
</reference>
<evidence type="ECO:0000255" key="1">
    <source>
        <dbReference type="HAMAP-Rule" id="MF_00523"/>
    </source>
</evidence>
<protein>
    <recommendedName>
        <fullName evidence="1">UDP-3-O-acylglucosamine N-acyltransferase</fullName>
        <ecNumber evidence="1">2.3.1.191</ecNumber>
    </recommendedName>
</protein>